<evidence type="ECO:0000255" key="1">
    <source>
        <dbReference type="HAMAP-Rule" id="MF_00823"/>
    </source>
</evidence>
<evidence type="ECO:0000255" key="2">
    <source>
        <dbReference type="PROSITE-ProRule" id="PRU01137"/>
    </source>
</evidence>
<accession>A9N949</accession>
<organism>
    <name type="scientific">Coxiella burnetii (strain RSA 331 / Henzerling II)</name>
    <dbReference type="NCBI Taxonomy" id="360115"/>
    <lineage>
        <taxon>Bacteria</taxon>
        <taxon>Pseudomonadati</taxon>
        <taxon>Pseudomonadota</taxon>
        <taxon>Gammaproteobacteria</taxon>
        <taxon>Legionellales</taxon>
        <taxon>Coxiellaceae</taxon>
        <taxon>Coxiella</taxon>
    </lineage>
</organism>
<comment type="function">
    <text evidence="1">Component of the acetyl coenzyme A carboxylase (ACC) complex. First, biotin carboxylase catalyzes the carboxylation of biotin on its carrier protein (BCCP) and then the CO(2) group is transferred by the carboxyltransferase to acetyl-CoA to form malonyl-CoA.</text>
</comment>
<comment type="catalytic activity">
    <reaction evidence="1">
        <text>N(6)-carboxybiotinyl-L-lysyl-[protein] + acetyl-CoA = N(6)-biotinyl-L-lysyl-[protein] + malonyl-CoA</text>
        <dbReference type="Rhea" id="RHEA:54728"/>
        <dbReference type="Rhea" id="RHEA-COMP:10505"/>
        <dbReference type="Rhea" id="RHEA-COMP:10506"/>
        <dbReference type="ChEBI" id="CHEBI:57288"/>
        <dbReference type="ChEBI" id="CHEBI:57384"/>
        <dbReference type="ChEBI" id="CHEBI:83144"/>
        <dbReference type="ChEBI" id="CHEBI:83145"/>
        <dbReference type="EC" id="2.1.3.15"/>
    </reaction>
</comment>
<comment type="pathway">
    <text evidence="1">Lipid metabolism; malonyl-CoA biosynthesis; malonyl-CoA from acetyl-CoA: step 1/1.</text>
</comment>
<comment type="subunit">
    <text evidence="1">Acetyl-CoA carboxylase is a heterohexamer composed of biotin carboxyl carrier protein (AccB), biotin carboxylase (AccC) and two subunits each of ACCase subunit alpha (AccA) and ACCase subunit beta (AccD).</text>
</comment>
<comment type="subcellular location">
    <subcellularLocation>
        <location evidence="1">Cytoplasm</location>
    </subcellularLocation>
</comment>
<comment type="similarity">
    <text evidence="1">Belongs to the AccA family.</text>
</comment>
<reference key="1">
    <citation type="submission" date="2007-11" db="EMBL/GenBank/DDBJ databases">
        <title>Genome sequencing of phylogenetically and phenotypically diverse Coxiella burnetii isolates.</title>
        <authorList>
            <person name="Seshadri R."/>
            <person name="Samuel J.E."/>
        </authorList>
    </citation>
    <scope>NUCLEOTIDE SEQUENCE [LARGE SCALE GENOMIC DNA]</scope>
    <source>
        <strain>RSA 331 / Henzerling II</strain>
    </source>
</reference>
<protein>
    <recommendedName>
        <fullName evidence="1">Acetyl-coenzyme A carboxylase carboxyl transferase subunit alpha</fullName>
        <shortName evidence="1">ACCase subunit alpha</shortName>
        <shortName evidence="1">Acetyl-CoA carboxylase carboxyltransferase subunit alpha</shortName>
        <ecNumber evidence="1">2.1.3.15</ecNumber>
    </recommendedName>
</protein>
<gene>
    <name evidence="1" type="primary">accA</name>
    <name type="ordered locus">COXBURSA331_A1693</name>
</gene>
<feature type="chain" id="PRO_1000083924" description="Acetyl-coenzyme A carboxylase carboxyl transferase subunit alpha">
    <location>
        <begin position="1"/>
        <end position="316"/>
    </location>
</feature>
<feature type="domain" description="CoA carboxyltransferase C-terminal" evidence="2">
    <location>
        <begin position="39"/>
        <end position="293"/>
    </location>
</feature>
<keyword id="KW-0067">ATP-binding</keyword>
<keyword id="KW-0963">Cytoplasm</keyword>
<keyword id="KW-0275">Fatty acid biosynthesis</keyword>
<keyword id="KW-0276">Fatty acid metabolism</keyword>
<keyword id="KW-0444">Lipid biosynthesis</keyword>
<keyword id="KW-0443">Lipid metabolism</keyword>
<keyword id="KW-0547">Nucleotide-binding</keyword>
<keyword id="KW-0808">Transferase</keyword>
<name>ACCA_COXBR</name>
<dbReference type="EC" id="2.1.3.15" evidence="1"/>
<dbReference type="EMBL" id="CP000890">
    <property type="protein sequence ID" value="ABX78840.1"/>
    <property type="molecule type" value="Genomic_DNA"/>
</dbReference>
<dbReference type="RefSeq" id="WP_012220689.1">
    <property type="nucleotide sequence ID" value="NC_010117.1"/>
</dbReference>
<dbReference type="SMR" id="A9N949"/>
<dbReference type="KEGG" id="cbs:COXBURSA331_A1693"/>
<dbReference type="HOGENOM" id="CLU_015486_0_2_6"/>
<dbReference type="UniPathway" id="UPA00655">
    <property type="reaction ID" value="UER00711"/>
</dbReference>
<dbReference type="GO" id="GO:0009317">
    <property type="term" value="C:acetyl-CoA carboxylase complex"/>
    <property type="evidence" value="ECO:0007669"/>
    <property type="project" value="InterPro"/>
</dbReference>
<dbReference type="GO" id="GO:0003989">
    <property type="term" value="F:acetyl-CoA carboxylase activity"/>
    <property type="evidence" value="ECO:0007669"/>
    <property type="project" value="InterPro"/>
</dbReference>
<dbReference type="GO" id="GO:0005524">
    <property type="term" value="F:ATP binding"/>
    <property type="evidence" value="ECO:0007669"/>
    <property type="project" value="UniProtKB-KW"/>
</dbReference>
<dbReference type="GO" id="GO:0016743">
    <property type="term" value="F:carboxyl- or carbamoyltransferase activity"/>
    <property type="evidence" value="ECO:0007669"/>
    <property type="project" value="UniProtKB-UniRule"/>
</dbReference>
<dbReference type="GO" id="GO:0006633">
    <property type="term" value="P:fatty acid biosynthetic process"/>
    <property type="evidence" value="ECO:0007669"/>
    <property type="project" value="UniProtKB-KW"/>
</dbReference>
<dbReference type="GO" id="GO:2001295">
    <property type="term" value="P:malonyl-CoA biosynthetic process"/>
    <property type="evidence" value="ECO:0007669"/>
    <property type="project" value="UniProtKB-UniRule"/>
</dbReference>
<dbReference type="Gene3D" id="3.90.226.10">
    <property type="entry name" value="2-enoyl-CoA Hydratase, Chain A, domain 1"/>
    <property type="match status" value="1"/>
</dbReference>
<dbReference type="HAMAP" id="MF_00823">
    <property type="entry name" value="AcetylCoA_CT_alpha"/>
    <property type="match status" value="1"/>
</dbReference>
<dbReference type="InterPro" id="IPR001095">
    <property type="entry name" value="Acetyl_CoA_COase_a_su"/>
</dbReference>
<dbReference type="InterPro" id="IPR029045">
    <property type="entry name" value="ClpP/crotonase-like_dom_sf"/>
</dbReference>
<dbReference type="InterPro" id="IPR011763">
    <property type="entry name" value="COA_CT_C"/>
</dbReference>
<dbReference type="NCBIfam" id="TIGR00513">
    <property type="entry name" value="accA"/>
    <property type="match status" value="1"/>
</dbReference>
<dbReference type="NCBIfam" id="NF041504">
    <property type="entry name" value="AccA_sub"/>
    <property type="match status" value="1"/>
</dbReference>
<dbReference type="NCBIfam" id="NF004344">
    <property type="entry name" value="PRK05724.1"/>
    <property type="match status" value="1"/>
</dbReference>
<dbReference type="PANTHER" id="PTHR42853">
    <property type="entry name" value="ACETYL-COENZYME A CARBOXYLASE CARBOXYL TRANSFERASE SUBUNIT ALPHA"/>
    <property type="match status" value="1"/>
</dbReference>
<dbReference type="PANTHER" id="PTHR42853:SF3">
    <property type="entry name" value="ACETYL-COENZYME A CARBOXYLASE CARBOXYL TRANSFERASE SUBUNIT ALPHA, CHLOROPLASTIC"/>
    <property type="match status" value="1"/>
</dbReference>
<dbReference type="Pfam" id="PF03255">
    <property type="entry name" value="ACCA"/>
    <property type="match status" value="1"/>
</dbReference>
<dbReference type="PRINTS" id="PR01069">
    <property type="entry name" value="ACCCTRFRASEA"/>
</dbReference>
<dbReference type="SUPFAM" id="SSF52096">
    <property type="entry name" value="ClpP/crotonase"/>
    <property type="match status" value="1"/>
</dbReference>
<dbReference type="PROSITE" id="PS50989">
    <property type="entry name" value="COA_CT_CTER"/>
    <property type="match status" value="1"/>
</dbReference>
<sequence>MNLDYLDFEQPIAELQAKIDELRRVGTSQEINLTEEVNKLEEKNAQLTRQIFSNLTAQQIVQLARHPLRPYTLDYIQRIFTDFNELHGDRHYSQASAIIGGLARLNGEPVMVIGHQKGRTTQEKIYRNFGMARPEGFRKALRLMKLAERFSIPVITLIDTPGAYPGIGAEERNQSEAIARNLFEMAQLKIPIICTIIGEGCSGGALAIGVGDRTLMLQYAYYSVISPEGCASILWKSAEKAGEAAEALGLTANRLYELGLIDEIIKEPLGGAHRDTDAMAEKLKKHLQANLTNLQAKSANDLLEERYRRWLSYGKD</sequence>
<proteinExistence type="inferred from homology"/>